<name>NUOD_DESHY</name>
<proteinExistence type="inferred from homology"/>
<gene>
    <name evidence="1" type="primary">nuoD</name>
    <name type="ordered locus">DSY2585</name>
</gene>
<organism>
    <name type="scientific">Desulfitobacterium hafniense (strain Y51)</name>
    <dbReference type="NCBI Taxonomy" id="138119"/>
    <lineage>
        <taxon>Bacteria</taxon>
        <taxon>Bacillati</taxon>
        <taxon>Bacillota</taxon>
        <taxon>Clostridia</taxon>
        <taxon>Eubacteriales</taxon>
        <taxon>Desulfitobacteriaceae</taxon>
        <taxon>Desulfitobacterium</taxon>
    </lineage>
</organism>
<protein>
    <recommendedName>
        <fullName evidence="1">NADH-quinone oxidoreductase subunit D</fullName>
        <ecNumber evidence="1">7.1.1.-</ecNumber>
    </recommendedName>
    <alternativeName>
        <fullName evidence="1">NADH dehydrogenase I subunit D</fullName>
    </alternativeName>
    <alternativeName>
        <fullName evidence="1">NDH-1 subunit D</fullName>
    </alternativeName>
</protein>
<keyword id="KW-1003">Cell membrane</keyword>
<keyword id="KW-0472">Membrane</keyword>
<keyword id="KW-0520">NAD</keyword>
<keyword id="KW-0874">Quinone</keyword>
<keyword id="KW-1185">Reference proteome</keyword>
<keyword id="KW-1278">Translocase</keyword>
<keyword id="KW-0813">Transport</keyword>
<evidence type="ECO:0000255" key="1">
    <source>
        <dbReference type="HAMAP-Rule" id="MF_01358"/>
    </source>
</evidence>
<comment type="function">
    <text evidence="1">NDH-1 shuttles electrons from NADH, via FMN and iron-sulfur (Fe-S) centers, to quinones in the respiratory chain. The immediate electron acceptor for the enzyme in this species is believed to be a menaquinone. Couples the redox reaction to proton translocation (for every two electrons transferred, four hydrogen ions are translocated across the cytoplasmic membrane), and thus conserves the redox energy in a proton gradient.</text>
</comment>
<comment type="catalytic activity">
    <reaction evidence="1">
        <text>a quinone + NADH + 5 H(+)(in) = a quinol + NAD(+) + 4 H(+)(out)</text>
        <dbReference type="Rhea" id="RHEA:57888"/>
        <dbReference type="ChEBI" id="CHEBI:15378"/>
        <dbReference type="ChEBI" id="CHEBI:24646"/>
        <dbReference type="ChEBI" id="CHEBI:57540"/>
        <dbReference type="ChEBI" id="CHEBI:57945"/>
        <dbReference type="ChEBI" id="CHEBI:132124"/>
    </reaction>
</comment>
<comment type="subunit">
    <text evidence="1">NDH-1 is composed of 14 different subunits. Subunits NuoB, C, D, E, F, and G constitute the peripheral sector of the complex.</text>
</comment>
<comment type="subcellular location">
    <subcellularLocation>
        <location evidence="1">Cell membrane</location>
        <topology evidence="1">Peripheral membrane protein</topology>
        <orientation evidence="1">Cytoplasmic side</orientation>
    </subcellularLocation>
</comment>
<comment type="similarity">
    <text evidence="1">Belongs to the complex I 49 kDa subunit family.</text>
</comment>
<feature type="chain" id="PRO_0000357806" description="NADH-quinone oxidoreductase subunit D">
    <location>
        <begin position="1"/>
        <end position="370"/>
    </location>
</feature>
<reference key="1">
    <citation type="journal article" date="2006" name="J. Bacteriol.">
        <title>Complete genome sequence of the dehalorespiring bacterium Desulfitobacterium hafniense Y51 and comparison with Dehalococcoides ethenogenes 195.</title>
        <authorList>
            <person name="Nonaka H."/>
            <person name="Keresztes G."/>
            <person name="Shinoda Y."/>
            <person name="Ikenaga Y."/>
            <person name="Abe M."/>
            <person name="Naito K."/>
            <person name="Inatomi K."/>
            <person name="Furukawa K."/>
            <person name="Inui M."/>
            <person name="Yukawa H."/>
        </authorList>
    </citation>
    <scope>NUCLEOTIDE SEQUENCE [LARGE SCALE GENOMIC DNA]</scope>
    <source>
        <strain>Y51</strain>
    </source>
</reference>
<accession>Q24UB8</accession>
<dbReference type="EC" id="7.1.1.-" evidence="1"/>
<dbReference type="EMBL" id="AP008230">
    <property type="protein sequence ID" value="BAE84374.1"/>
    <property type="molecule type" value="Genomic_DNA"/>
</dbReference>
<dbReference type="RefSeq" id="WP_005813218.1">
    <property type="nucleotide sequence ID" value="NC_007907.1"/>
</dbReference>
<dbReference type="SMR" id="Q24UB8"/>
<dbReference type="STRING" id="138119.DSY2585"/>
<dbReference type="KEGG" id="dsy:DSY2585"/>
<dbReference type="eggNOG" id="COG0649">
    <property type="taxonomic scope" value="Bacteria"/>
</dbReference>
<dbReference type="HOGENOM" id="CLU_015134_1_2_9"/>
<dbReference type="Proteomes" id="UP000001946">
    <property type="component" value="Chromosome"/>
</dbReference>
<dbReference type="GO" id="GO:0005886">
    <property type="term" value="C:plasma membrane"/>
    <property type="evidence" value="ECO:0007669"/>
    <property type="project" value="UniProtKB-SubCell"/>
</dbReference>
<dbReference type="GO" id="GO:0051287">
    <property type="term" value="F:NAD binding"/>
    <property type="evidence" value="ECO:0007669"/>
    <property type="project" value="InterPro"/>
</dbReference>
<dbReference type="GO" id="GO:0050136">
    <property type="term" value="F:NADH:ubiquinone reductase (non-electrogenic) activity"/>
    <property type="evidence" value="ECO:0007669"/>
    <property type="project" value="UniProtKB-UniRule"/>
</dbReference>
<dbReference type="GO" id="GO:0048038">
    <property type="term" value="F:quinone binding"/>
    <property type="evidence" value="ECO:0007669"/>
    <property type="project" value="UniProtKB-KW"/>
</dbReference>
<dbReference type="Gene3D" id="1.10.645.10">
    <property type="entry name" value="Cytochrome-c3 Hydrogenase, chain B"/>
    <property type="match status" value="1"/>
</dbReference>
<dbReference type="HAMAP" id="MF_01358">
    <property type="entry name" value="NDH1_NuoD"/>
    <property type="match status" value="1"/>
</dbReference>
<dbReference type="InterPro" id="IPR001135">
    <property type="entry name" value="NADH_Q_OxRdtase_suD"/>
</dbReference>
<dbReference type="InterPro" id="IPR014029">
    <property type="entry name" value="NADH_UbQ_OxRdtase_49kDa_CS"/>
</dbReference>
<dbReference type="InterPro" id="IPR022885">
    <property type="entry name" value="NDH1_su_D/H"/>
</dbReference>
<dbReference type="InterPro" id="IPR029014">
    <property type="entry name" value="NiFe-Hase_large"/>
</dbReference>
<dbReference type="NCBIfam" id="NF004739">
    <property type="entry name" value="PRK06075.1"/>
    <property type="match status" value="1"/>
</dbReference>
<dbReference type="PANTHER" id="PTHR11993:SF10">
    <property type="entry name" value="NADH DEHYDROGENASE [UBIQUINONE] IRON-SULFUR PROTEIN 2, MITOCHONDRIAL"/>
    <property type="match status" value="1"/>
</dbReference>
<dbReference type="PANTHER" id="PTHR11993">
    <property type="entry name" value="NADH-UBIQUINONE OXIDOREDUCTASE 49 KDA SUBUNIT"/>
    <property type="match status" value="1"/>
</dbReference>
<dbReference type="Pfam" id="PF00346">
    <property type="entry name" value="Complex1_49kDa"/>
    <property type="match status" value="2"/>
</dbReference>
<dbReference type="SUPFAM" id="SSF56762">
    <property type="entry name" value="HydB/Nqo4-like"/>
    <property type="match status" value="1"/>
</dbReference>
<dbReference type="PROSITE" id="PS00535">
    <property type="entry name" value="COMPLEX1_49K"/>
    <property type="match status" value="1"/>
</dbReference>
<sequence>MSDLYNEGTEELLLNMGPQHPSMHGVFRMVVRLQGETVTGIEPKIGYLHRGLEKIAESRTYPQFIPYTDRLDYLASPHNNLAYVQTVEKLMGLEIPERAEYLRIILAELARFASHQVFIASAALDMAGWTAWGYPFRDRERILDLFEMMSGSRLTVNCMRIGGVSAEPPAEFWPALESFLDDMPEKLEEYFNIYMGNEIAQARMKKVGILSKEVAENLCITGPALRASGVQYDVRKAEPYGIYDRFDFEVPVLYGCDTYDRNLIRFMEMNESLKIIRQAVRDIPEGPIMAKVPKIIKPPAGEVYHRVENPKGELGFYIVSNGTPKPERVKIRAGAFVNLQCLNEIGVGTYIQDLIASFASLDAVLGEVDK</sequence>